<protein>
    <recommendedName>
        <fullName>Flowering-promoting factor 1-like protein 2</fullName>
    </recommendedName>
    <alternativeName>
        <fullName>FPF1-like protein 2</fullName>
    </alternativeName>
</protein>
<name>FLP2_ARATH</name>
<accession>Q9LXB5</accession>
<sequence>MSGVWVFNNGVIRLVENPNQSGGVSTQSHGRRNVLVYLPTGEAVSSYSSLEQILRSLGWERYFSGDSDLIQYHKRSSIDLISLPRDFSKFNSVYMYDIVVKNPNSFHVRDFN</sequence>
<gene>
    <name type="primary">FLP2</name>
    <name type="ordered locus">At5g10625</name>
    <name type="ORF">F12B17_20</name>
</gene>
<comment type="function">
    <text evidence="1">Modulates the competence to flowering of apical meristems.</text>
</comment>
<comment type="tissue specificity">
    <text evidence="1">Expressed in leaves and in some parts of the flowers, mainly in the sepals.</text>
</comment>
<comment type="miscellaneous">
    <text>Overexpression of FLP2 results in shortening of the time to flowering.</text>
</comment>
<comment type="similarity">
    <text evidence="2">Belongs to the FPF1 family.</text>
</comment>
<feature type="chain" id="PRO_0000417315" description="Flowering-promoting factor 1-like protein 2">
    <location>
        <begin position="1"/>
        <end position="112"/>
    </location>
</feature>
<keyword id="KW-1185">Reference proteome</keyword>
<dbReference type="EMBL" id="AL353995">
    <property type="protein sequence ID" value="CAB89380.1"/>
    <property type="molecule type" value="Genomic_DNA"/>
</dbReference>
<dbReference type="EMBL" id="CP002688">
    <property type="protein sequence ID" value="AED91573.1"/>
    <property type="molecule type" value="Genomic_DNA"/>
</dbReference>
<dbReference type="EMBL" id="AY065245">
    <property type="status" value="NOT_ANNOTATED_CDS"/>
    <property type="molecule type" value="mRNA"/>
</dbReference>
<dbReference type="EMBL" id="BT014861">
    <property type="protein sequence ID" value="AAT41844.1"/>
    <property type="molecule type" value="mRNA"/>
</dbReference>
<dbReference type="PIR" id="T49976">
    <property type="entry name" value="T49976"/>
</dbReference>
<dbReference type="RefSeq" id="NP_974763.1">
    <property type="nucleotide sequence ID" value="NM_203034.2"/>
</dbReference>
<dbReference type="FunCoup" id="Q9LXB5">
    <property type="interactions" value="548"/>
</dbReference>
<dbReference type="STRING" id="3702.Q9LXB5"/>
<dbReference type="iPTMnet" id="Q9LXB5"/>
<dbReference type="PaxDb" id="3702-AT5G10625.1"/>
<dbReference type="ProteomicsDB" id="230034"/>
<dbReference type="EnsemblPlants" id="AT5G10625.1">
    <property type="protein sequence ID" value="AT5G10625.1"/>
    <property type="gene ID" value="AT5G10625"/>
</dbReference>
<dbReference type="GeneID" id="2745983"/>
<dbReference type="Gramene" id="AT5G10625.1">
    <property type="protein sequence ID" value="AT5G10625.1"/>
    <property type="gene ID" value="AT5G10625"/>
</dbReference>
<dbReference type="KEGG" id="ath:AT5G10625"/>
<dbReference type="Araport" id="AT5G10625"/>
<dbReference type="TAIR" id="AT5G10625"/>
<dbReference type="eggNOG" id="ENOG502S12G">
    <property type="taxonomic scope" value="Eukaryota"/>
</dbReference>
<dbReference type="HOGENOM" id="CLU_121629_0_1_1"/>
<dbReference type="InParanoid" id="Q9LXB5"/>
<dbReference type="OMA" id="GWERYFT"/>
<dbReference type="PhylomeDB" id="Q9LXB5"/>
<dbReference type="PRO" id="PR:Q9LXB5"/>
<dbReference type="Proteomes" id="UP000006548">
    <property type="component" value="Chromosome 5"/>
</dbReference>
<dbReference type="ExpressionAtlas" id="Q9LXB5">
    <property type="expression patterns" value="baseline and differential"/>
</dbReference>
<dbReference type="GO" id="GO:0009909">
    <property type="term" value="P:regulation of flower development"/>
    <property type="evidence" value="ECO:0007669"/>
    <property type="project" value="InterPro"/>
</dbReference>
<dbReference type="InterPro" id="IPR039274">
    <property type="entry name" value="FPF1"/>
</dbReference>
<dbReference type="PANTHER" id="PTHR33433">
    <property type="entry name" value="FLOWERING-PROMOTING FACTOR 1-LIKE PROTEIN 1"/>
    <property type="match status" value="1"/>
</dbReference>
<evidence type="ECO:0000269" key="1">
    <source ref="5"/>
</evidence>
<evidence type="ECO:0000305" key="2"/>
<reference key="1">
    <citation type="journal article" date="2000" name="Nature">
        <title>Sequence and analysis of chromosome 5 of the plant Arabidopsis thaliana.</title>
        <authorList>
            <person name="Tabata S."/>
            <person name="Kaneko T."/>
            <person name="Nakamura Y."/>
            <person name="Kotani H."/>
            <person name="Kato T."/>
            <person name="Asamizu E."/>
            <person name="Miyajima N."/>
            <person name="Sasamoto S."/>
            <person name="Kimura T."/>
            <person name="Hosouchi T."/>
            <person name="Kawashima K."/>
            <person name="Kohara M."/>
            <person name="Matsumoto M."/>
            <person name="Matsuno A."/>
            <person name="Muraki A."/>
            <person name="Nakayama S."/>
            <person name="Nakazaki N."/>
            <person name="Naruo K."/>
            <person name="Okumura S."/>
            <person name="Shinpo S."/>
            <person name="Takeuchi C."/>
            <person name="Wada T."/>
            <person name="Watanabe A."/>
            <person name="Yamada M."/>
            <person name="Yasuda M."/>
            <person name="Sato S."/>
            <person name="de la Bastide M."/>
            <person name="Huang E."/>
            <person name="Spiegel L."/>
            <person name="Gnoj L."/>
            <person name="O'Shaughnessy A."/>
            <person name="Preston R."/>
            <person name="Habermann K."/>
            <person name="Murray J."/>
            <person name="Johnson D."/>
            <person name="Rohlfing T."/>
            <person name="Nelson J."/>
            <person name="Stoneking T."/>
            <person name="Pepin K."/>
            <person name="Spieth J."/>
            <person name="Sekhon M."/>
            <person name="Armstrong J."/>
            <person name="Becker M."/>
            <person name="Belter E."/>
            <person name="Cordum H."/>
            <person name="Cordes M."/>
            <person name="Courtney L."/>
            <person name="Courtney W."/>
            <person name="Dante M."/>
            <person name="Du H."/>
            <person name="Edwards J."/>
            <person name="Fryman J."/>
            <person name="Haakensen B."/>
            <person name="Lamar E."/>
            <person name="Latreille P."/>
            <person name="Leonard S."/>
            <person name="Meyer R."/>
            <person name="Mulvaney E."/>
            <person name="Ozersky P."/>
            <person name="Riley A."/>
            <person name="Strowmatt C."/>
            <person name="Wagner-McPherson C."/>
            <person name="Wollam A."/>
            <person name="Yoakum M."/>
            <person name="Bell M."/>
            <person name="Dedhia N."/>
            <person name="Parnell L."/>
            <person name="Shah R."/>
            <person name="Rodriguez M."/>
            <person name="Hoon See L."/>
            <person name="Vil D."/>
            <person name="Baker J."/>
            <person name="Kirchoff K."/>
            <person name="Toth K."/>
            <person name="King L."/>
            <person name="Bahret A."/>
            <person name="Miller B."/>
            <person name="Marra M.A."/>
            <person name="Martienssen R."/>
            <person name="McCombie W.R."/>
            <person name="Wilson R.K."/>
            <person name="Murphy G."/>
            <person name="Bancroft I."/>
            <person name="Volckaert G."/>
            <person name="Wambutt R."/>
            <person name="Duesterhoeft A."/>
            <person name="Stiekema W."/>
            <person name="Pohl T."/>
            <person name="Entian K.-D."/>
            <person name="Terryn N."/>
            <person name="Hartley N."/>
            <person name="Bent E."/>
            <person name="Johnson S."/>
            <person name="Langham S.-A."/>
            <person name="McCullagh B."/>
            <person name="Robben J."/>
            <person name="Grymonprez B."/>
            <person name="Zimmermann W."/>
            <person name="Ramsperger U."/>
            <person name="Wedler H."/>
            <person name="Balke K."/>
            <person name="Wedler E."/>
            <person name="Peters S."/>
            <person name="van Staveren M."/>
            <person name="Dirkse W."/>
            <person name="Mooijman P."/>
            <person name="Klein Lankhorst R."/>
            <person name="Weitzenegger T."/>
            <person name="Bothe G."/>
            <person name="Rose M."/>
            <person name="Hauf J."/>
            <person name="Berneiser S."/>
            <person name="Hempel S."/>
            <person name="Feldpausch M."/>
            <person name="Lamberth S."/>
            <person name="Villarroel R."/>
            <person name="Gielen J."/>
            <person name="Ardiles W."/>
            <person name="Bents O."/>
            <person name="Lemcke K."/>
            <person name="Kolesov G."/>
            <person name="Mayer K.F.X."/>
            <person name="Rudd S."/>
            <person name="Schoof H."/>
            <person name="Schueller C."/>
            <person name="Zaccaria P."/>
            <person name="Mewes H.-W."/>
            <person name="Bevan M."/>
            <person name="Fransz P.F."/>
        </authorList>
    </citation>
    <scope>NUCLEOTIDE SEQUENCE [LARGE SCALE GENOMIC DNA]</scope>
    <source>
        <strain>cv. Columbia</strain>
    </source>
</reference>
<reference key="2">
    <citation type="journal article" date="2017" name="Plant J.">
        <title>Araport11: a complete reannotation of the Arabidopsis thaliana reference genome.</title>
        <authorList>
            <person name="Cheng C.Y."/>
            <person name="Krishnakumar V."/>
            <person name="Chan A.P."/>
            <person name="Thibaud-Nissen F."/>
            <person name="Schobel S."/>
            <person name="Town C.D."/>
        </authorList>
    </citation>
    <scope>GENOME REANNOTATION</scope>
    <source>
        <strain>cv. Columbia</strain>
    </source>
</reference>
<reference key="3">
    <citation type="journal article" date="2003" name="Science">
        <title>Empirical analysis of transcriptional activity in the Arabidopsis genome.</title>
        <authorList>
            <person name="Yamada K."/>
            <person name="Lim J."/>
            <person name="Dale J.M."/>
            <person name="Chen H."/>
            <person name="Shinn P."/>
            <person name="Palm C.J."/>
            <person name="Southwick A.M."/>
            <person name="Wu H.C."/>
            <person name="Kim C.J."/>
            <person name="Nguyen M."/>
            <person name="Pham P.K."/>
            <person name="Cheuk R.F."/>
            <person name="Karlin-Newmann G."/>
            <person name="Liu S.X."/>
            <person name="Lam B."/>
            <person name="Sakano H."/>
            <person name="Wu T."/>
            <person name="Yu G."/>
            <person name="Miranda M."/>
            <person name="Quach H.L."/>
            <person name="Tripp M."/>
            <person name="Chang C.H."/>
            <person name="Lee J.M."/>
            <person name="Toriumi M.J."/>
            <person name="Chan M.M."/>
            <person name="Tang C.C."/>
            <person name="Onodera C.S."/>
            <person name="Deng J.M."/>
            <person name="Akiyama K."/>
            <person name="Ansari Y."/>
            <person name="Arakawa T."/>
            <person name="Banh J."/>
            <person name="Banno F."/>
            <person name="Bowser L."/>
            <person name="Brooks S.Y."/>
            <person name="Carninci P."/>
            <person name="Chao Q."/>
            <person name="Choy N."/>
            <person name="Enju A."/>
            <person name="Goldsmith A.D."/>
            <person name="Gurjal M."/>
            <person name="Hansen N.F."/>
            <person name="Hayashizaki Y."/>
            <person name="Johnson-Hopson C."/>
            <person name="Hsuan V.W."/>
            <person name="Iida K."/>
            <person name="Karnes M."/>
            <person name="Khan S."/>
            <person name="Koesema E."/>
            <person name="Ishida J."/>
            <person name="Jiang P.X."/>
            <person name="Jones T."/>
            <person name="Kawai J."/>
            <person name="Kamiya A."/>
            <person name="Meyers C."/>
            <person name="Nakajima M."/>
            <person name="Narusaka M."/>
            <person name="Seki M."/>
            <person name="Sakurai T."/>
            <person name="Satou M."/>
            <person name="Tamse R."/>
            <person name="Vaysberg M."/>
            <person name="Wallender E.K."/>
            <person name="Wong C."/>
            <person name="Yamamura Y."/>
            <person name="Yuan S."/>
            <person name="Shinozaki K."/>
            <person name="Davis R.W."/>
            <person name="Theologis A."/>
            <person name="Ecker J.R."/>
        </authorList>
    </citation>
    <scope>NUCLEOTIDE SEQUENCE [LARGE SCALE MRNA]</scope>
    <source>
        <strain>cv. Columbia</strain>
    </source>
</reference>
<reference key="4">
    <citation type="submission" date="2004-06" db="EMBL/GenBank/DDBJ databases">
        <title>Arabidopsis ORF clones.</title>
        <authorList>
            <person name="Cheuk R.F."/>
            <person name="Chen H."/>
            <person name="Kim C.J."/>
            <person name="Shinn P."/>
            <person name="Ecker J.R."/>
        </authorList>
    </citation>
    <scope>NUCLEOTIDE SEQUENCE [LARGE SCALE MRNA]</scope>
    <source>
        <strain>cv. Columbia</strain>
    </source>
</reference>
<reference key="5">
    <citation type="book" date="2000" name="Proceedings of the 11th international conference on Arabidopsis research">
        <title>The FPF gene family and flowering time control in Arabidopsis.</title>
        <authorList>
            <person name="Borner R."/>
            <person name="Kampmann G."/>
            <person name="Apel K."/>
            <person name="Melzer S."/>
        </authorList>
    </citation>
    <scope>GENE FAMILY</scope>
    <scope>FUNCTION</scope>
    <scope>TISSUE SPECIFICITY</scope>
</reference>
<organism>
    <name type="scientific">Arabidopsis thaliana</name>
    <name type="common">Mouse-ear cress</name>
    <dbReference type="NCBI Taxonomy" id="3702"/>
    <lineage>
        <taxon>Eukaryota</taxon>
        <taxon>Viridiplantae</taxon>
        <taxon>Streptophyta</taxon>
        <taxon>Embryophyta</taxon>
        <taxon>Tracheophyta</taxon>
        <taxon>Spermatophyta</taxon>
        <taxon>Magnoliopsida</taxon>
        <taxon>eudicotyledons</taxon>
        <taxon>Gunneridae</taxon>
        <taxon>Pentapetalae</taxon>
        <taxon>rosids</taxon>
        <taxon>malvids</taxon>
        <taxon>Brassicales</taxon>
        <taxon>Brassicaceae</taxon>
        <taxon>Camelineae</taxon>
        <taxon>Arabidopsis</taxon>
    </lineage>
</organism>
<proteinExistence type="evidence at transcript level"/>